<accession>P48524</accession>
<accession>D6W0A2</accession>
<sequence length="976" mass="109174">MAKDLNDSGFPPKRKPLLRPQRSDFTANSSTTMNVNANTRGRGRQKQEGGKGSSRSPSLHSPKSWIRSASATGILGLRRPELAHSHSHAPSTGTPAGGNRSPLRRSTANATPVETGRSLTDGDINNVVDVLPSFEMYNTLHRHIPQGNVDPDRHDFPPSYQEANNSTATGAAGSSADLSHQSLSTDALGATRSSSTSNLENLIPLRTEHHSIAAHQSTAVDEDSLDIPPILDDLNDTDNIFIDKLYTLPKMSTPIEITIKTTKHAPIPHVKPEEESILKEYTSGDLIHGFITIENKSQANLKFEMFYVTLESYISIIDKVKSKRTIKRFLRMVDLSASWSYSKIALGSGVDFIPADVDYDGSVFGLNNSRVLEPGVKYKKFFIFKLPLQLLDVTCKQEHFSHCLLPPSFGIDKYRNNCKYSGIKVNRVLGCGHLGTKGSPILTNDMSDDNLSINYTIDARIVGKDQKASKLYIMKEREYNLRVIPFGFDANVVGERTTMSQLNDITKLVQERLDALRKIFQRLEKKEPITNRDIHGADLSGTIDDSIESDSQEILQRKLDQLHIKNRNNYLVNYNDLKLGHDLDNGRSGNSGHNTDTSRAWGPFVESELKYKLKNKSNSSSFLNFSHFLNSSSSSMSSSSNAGKNNHDLTGNKERTGLILVKAKIPKQGLPYWAPSLLRKTNVFESKSKHDQENWVRLSELIPEDVKKPLEKLDLQLTCIESDNSLPHDPPEIQSITTELICITAKSDNSIPIKLNSELLMNKEKLTSIKALYDDFHSKICEYETKFNKNFLELNELYNMNRGDRRPKELKFTDFITSQLFNDIESICNLKVSVHNLSNIFKKQVSTLKQHSKHALSEDSISHTGNGSSSSPSSASLTPVTSSSKSSLFLPSGSSSTSLKFTDQIVHKWVRIAPLQYKRDINVNLEFNKDIKETLIPSFESCLCCRFYCVRVMIKFENHLGVAKIDIPISVRQVTK</sequence>
<feature type="chain" id="PRO_0000065022" description="Ubiquitin ligase-binding protein BUL1">
    <location>
        <begin position="1"/>
        <end position="976"/>
    </location>
</feature>
<feature type="region of interest" description="Disordered" evidence="1">
    <location>
        <begin position="1"/>
        <end position="65"/>
    </location>
</feature>
<feature type="region of interest" description="Disordered" evidence="1">
    <location>
        <begin position="82"/>
        <end position="124"/>
    </location>
</feature>
<feature type="region of interest" description="Disordered" evidence="1">
    <location>
        <begin position="145"/>
        <end position="196"/>
    </location>
</feature>
<feature type="region of interest" description="Disordered" evidence="1">
    <location>
        <begin position="857"/>
        <end position="878"/>
    </location>
</feature>
<feature type="short sequence motif" description="PY-motif">
    <location>
        <begin position="156"/>
        <end position="160"/>
    </location>
</feature>
<feature type="compositionally biased region" description="Polar residues" evidence="1">
    <location>
        <begin position="23"/>
        <end position="39"/>
    </location>
</feature>
<feature type="compositionally biased region" description="Low complexity" evidence="1">
    <location>
        <begin position="53"/>
        <end position="64"/>
    </location>
</feature>
<feature type="compositionally biased region" description="Low complexity" evidence="1">
    <location>
        <begin position="163"/>
        <end position="176"/>
    </location>
</feature>
<feature type="compositionally biased region" description="Polar residues" evidence="1">
    <location>
        <begin position="177"/>
        <end position="196"/>
    </location>
</feature>
<feature type="compositionally biased region" description="Low complexity" evidence="1">
    <location>
        <begin position="862"/>
        <end position="878"/>
    </location>
</feature>
<feature type="modified residue" description="Phosphoserine" evidence="17">
    <location>
        <position position="58"/>
    </location>
</feature>
<feature type="modified residue" description="Phosphoserine" evidence="16">
    <location>
        <position position="70"/>
    </location>
</feature>
<feature type="mutagenesis site" description="Abolishes interaction with RSP5 and reduces HSE-mediated gene expression; when associated with A-158." evidence="5 14">
    <original>P</original>
    <variation>Q</variation>
    <location>
        <position position="157"/>
    </location>
</feature>
<feature type="mutagenesis site" description="Abolishes interaction with RSP5 and reduces HSE-mediated gene expression; when associated with Q-157." evidence="5 14">
    <original>P</original>
    <variation>A</variation>
    <location>
        <position position="158"/>
    </location>
</feature>
<feature type="sequence conflict" description="In Ref. 1; BAA08787." evidence="15" ref="1">
    <original>V</original>
    <variation>A</variation>
    <location>
        <position position="35"/>
    </location>
</feature>
<feature type="sequence conflict" description="In Ref. 5; AAB07266." evidence="15" ref="5">
    <original>YDD</original>
    <variation>ISN</variation>
    <location>
        <begin position="773"/>
        <end position="775"/>
    </location>
</feature>
<feature type="sequence conflict" description="In Ref. 2; CAA61363." evidence="15" ref="2">
    <original>A</original>
    <variation>R</variation>
    <location>
        <position position="963"/>
    </location>
</feature>
<dbReference type="EMBL" id="D50083">
    <property type="protein sequence ID" value="BAA08787.1"/>
    <property type="molecule type" value="Genomic_DNA"/>
</dbReference>
<dbReference type="EMBL" id="X88901">
    <property type="protein sequence ID" value="CAA61363.1"/>
    <property type="molecule type" value="Genomic_DNA"/>
</dbReference>
<dbReference type="EMBL" id="Z49704">
    <property type="protein sequence ID" value="CAA89773.1"/>
    <property type="molecule type" value="Genomic_DNA"/>
</dbReference>
<dbReference type="EMBL" id="Z49260">
    <property type="protein sequence ID" value="CAA89258.1"/>
    <property type="molecule type" value="Genomic_DNA"/>
</dbReference>
<dbReference type="EMBL" id="L40587">
    <property type="protein sequence ID" value="AAB07266.1"/>
    <property type="molecule type" value="Genomic_DNA"/>
</dbReference>
<dbReference type="EMBL" id="BK006946">
    <property type="protein sequence ID" value="DAA10176.1"/>
    <property type="molecule type" value="Genomic_DNA"/>
</dbReference>
<dbReference type="PIR" id="S57725">
    <property type="entry name" value="S57725"/>
</dbReference>
<dbReference type="RefSeq" id="NP_014002.1">
    <property type="nucleotide sequence ID" value="NM_001182782.1"/>
</dbReference>
<dbReference type="BioGRID" id="35454">
    <property type="interactions" value="259"/>
</dbReference>
<dbReference type="ComplexPortal" id="CPX-2921">
    <property type="entry name" value="RSP5-BUL1 ubiquitin ligase complex"/>
</dbReference>
<dbReference type="DIP" id="DIP-2502N"/>
<dbReference type="FunCoup" id="P48524">
    <property type="interactions" value="510"/>
</dbReference>
<dbReference type="IntAct" id="P48524">
    <property type="interactions" value="26"/>
</dbReference>
<dbReference type="MINT" id="P48524"/>
<dbReference type="STRING" id="4932.YMR275C"/>
<dbReference type="GlyGen" id="P48524">
    <property type="glycosylation" value="2 sites, 1 O-linked glycan (1 site)"/>
</dbReference>
<dbReference type="iPTMnet" id="P48524"/>
<dbReference type="PaxDb" id="4932-YMR275C"/>
<dbReference type="PeptideAtlas" id="P48524"/>
<dbReference type="EnsemblFungi" id="YMR275C_mRNA">
    <property type="protein sequence ID" value="YMR275C"/>
    <property type="gene ID" value="YMR275C"/>
</dbReference>
<dbReference type="GeneID" id="855318"/>
<dbReference type="KEGG" id="sce:YMR275C"/>
<dbReference type="AGR" id="SGD:S000004888"/>
<dbReference type="SGD" id="S000004888">
    <property type="gene designation" value="BUL1"/>
</dbReference>
<dbReference type="VEuPathDB" id="FungiDB:YMR275C"/>
<dbReference type="eggNOG" id="ENOG502QSAC">
    <property type="taxonomic scope" value="Eukaryota"/>
</dbReference>
<dbReference type="GeneTree" id="ENSGT00940000176311"/>
<dbReference type="HOGENOM" id="CLU_010320_0_0_1"/>
<dbReference type="InParanoid" id="P48524"/>
<dbReference type="OMA" id="LPYWAPS"/>
<dbReference type="OrthoDB" id="2283785at2759"/>
<dbReference type="BioCyc" id="YEAST:G3O-32946-MONOMER"/>
<dbReference type="UniPathway" id="UPA00143"/>
<dbReference type="BioGRID-ORCS" id="855318">
    <property type="hits" value="3 hits in 10 CRISPR screens"/>
</dbReference>
<dbReference type="PRO" id="PR:P48524"/>
<dbReference type="Proteomes" id="UP000002311">
    <property type="component" value="Chromosome XIII"/>
</dbReference>
<dbReference type="RNAct" id="P48524">
    <property type="molecule type" value="protein"/>
</dbReference>
<dbReference type="GO" id="GO:0005737">
    <property type="term" value="C:cytoplasm"/>
    <property type="evidence" value="ECO:0007669"/>
    <property type="project" value="UniProtKB-SubCell"/>
</dbReference>
<dbReference type="GO" id="GO:1990306">
    <property type="term" value="C:RSP5-BUL ubiquitin ligase complex"/>
    <property type="evidence" value="ECO:0000353"/>
    <property type="project" value="ComplexPortal"/>
</dbReference>
<dbReference type="GO" id="GO:0000151">
    <property type="term" value="C:ubiquitin ligase complex"/>
    <property type="evidence" value="ECO:0000314"/>
    <property type="project" value="SGD"/>
</dbReference>
<dbReference type="GO" id="GO:0034450">
    <property type="term" value="F:ubiquitin-ubiquitin ligase activity"/>
    <property type="evidence" value="ECO:0000316"/>
    <property type="project" value="SGD"/>
</dbReference>
<dbReference type="GO" id="GO:1904669">
    <property type="term" value="P:ATP export"/>
    <property type="evidence" value="ECO:0000315"/>
    <property type="project" value="SGD"/>
</dbReference>
<dbReference type="GO" id="GO:0000001">
    <property type="term" value="P:mitochondrion inheritance"/>
    <property type="evidence" value="ECO:0000316"/>
    <property type="project" value="SGD"/>
</dbReference>
<dbReference type="GO" id="GO:2000397">
    <property type="term" value="P:positive regulation of ubiquitin-dependent endocytosis"/>
    <property type="evidence" value="ECO:0000303"/>
    <property type="project" value="ComplexPortal"/>
</dbReference>
<dbReference type="GO" id="GO:0006513">
    <property type="term" value="P:protein monoubiquitination"/>
    <property type="evidence" value="ECO:0000315"/>
    <property type="project" value="SGD"/>
</dbReference>
<dbReference type="GO" id="GO:0000209">
    <property type="term" value="P:protein polyubiquitination"/>
    <property type="evidence" value="ECO:0000315"/>
    <property type="project" value="SGD"/>
</dbReference>
<dbReference type="GO" id="GO:0009749">
    <property type="term" value="P:response to glucose"/>
    <property type="evidence" value="ECO:0000316"/>
    <property type="project" value="SGD"/>
</dbReference>
<dbReference type="GO" id="GO:0070086">
    <property type="term" value="P:ubiquitin-dependent endocytosis"/>
    <property type="evidence" value="ECO:0000316"/>
    <property type="project" value="SGD"/>
</dbReference>
<dbReference type="GO" id="GO:0043162">
    <property type="term" value="P:ubiquitin-dependent protein catabolic process via the multivesicular body sorting pathway"/>
    <property type="evidence" value="ECO:0000303"/>
    <property type="project" value="ComplexPortal"/>
</dbReference>
<dbReference type="InterPro" id="IPR039634">
    <property type="entry name" value="Bul1-like"/>
</dbReference>
<dbReference type="InterPro" id="IPR022794">
    <property type="entry name" value="Bul1_C"/>
</dbReference>
<dbReference type="InterPro" id="IPR007519">
    <property type="entry name" value="Bul1_N"/>
</dbReference>
<dbReference type="PANTHER" id="PTHR31904">
    <property type="entry name" value="BYPASS OF STOP CODON PROTEIN 5-RELATED"/>
    <property type="match status" value="1"/>
</dbReference>
<dbReference type="PANTHER" id="PTHR31904:SF1">
    <property type="entry name" value="BYPASS OF STOP CODON PROTEIN 5-RELATED"/>
    <property type="match status" value="1"/>
</dbReference>
<dbReference type="Pfam" id="PF04426">
    <property type="entry name" value="Bul1_C"/>
    <property type="match status" value="1"/>
</dbReference>
<dbReference type="Pfam" id="PF04425">
    <property type="entry name" value="Bul1_N"/>
    <property type="match status" value="1"/>
</dbReference>
<name>BUL1_YEAST</name>
<protein>
    <recommendedName>
        <fullName>Ubiquitin ligase-binding protein BUL1</fullName>
    </recommendedName>
    <alternativeName>
        <fullName>Respiration deficiency suppressor 1</fullName>
    </alternativeName>
</protein>
<proteinExistence type="evidence at protein level"/>
<comment type="function">
    <text evidence="2 3 4 5 6 9 10 11 12 13 14">Component of a RSP5 ubiquitin ligase complex which specifies polyubiquitination and intracellular trafficking of the general amino acid permease GAP1 as well as other permeases such as PMA1. The RSP5-BUL1/2 complex is also necessary for the heat-shock element (HSE)-mediated gene expression, nitrogen starvation GLN3-dependent transcription and pressure-induced differential regulation of the 2 tryptophan permeases TAT1 and TAT2.</text>
</comment>
<comment type="pathway">
    <text>Protein modification; protein ubiquitination.</text>
</comment>
<comment type="subunit">
    <text>Component of the RSP5-BUL1/2 ubiquitin ligase complex composed of at least RSP5 and BUL1 or BUL2.</text>
</comment>
<comment type="interaction">
    <interactant intactId="EBI-3881">
        <id>P48524</id>
    </interactant>
    <interactant intactId="EBI-16150">
        <id>P26783</id>
        <label>RPS5</label>
    </interactant>
    <organismsDiffer>false</organismsDiffer>
    <experiments>3</experiments>
</comment>
<comment type="interaction">
    <interactant intactId="EBI-3881">
        <id>P48524</id>
    </interactant>
    <interactant intactId="EBI-16219">
        <id>P39940</id>
        <label>RSP5</label>
    </interactant>
    <organismsDiffer>false</organismsDiffer>
    <experiments>4</experiments>
</comment>
<comment type="subcellular location">
    <subcellularLocation>
        <location evidence="7">Cytoplasm</location>
    </subcellularLocation>
</comment>
<comment type="domain">
    <text evidence="14">The PY-motif is required for the interaction with RSP5 ubiquitin-ligase and the HSE-mediated gene expression.</text>
</comment>
<comment type="miscellaneous">
    <text evidence="8">Present with 486 molecules/cell in log phase SD medium.</text>
</comment>
<comment type="similarity">
    <text evidence="15">Belongs to the BUL1 family.</text>
</comment>
<reference key="1">
    <citation type="journal article" date="1996" name="Mol. Cell. Biol.">
        <title>Bul1, a new protein that binds to the Rsp5 ubiquitin ligase in Saccharomyces cerevisiae.</title>
        <authorList>
            <person name="Yashiroda H."/>
            <person name="Oguchi T."/>
            <person name="Yasuda Y."/>
            <person name="Toh-e A."/>
            <person name="Kikuchi Y."/>
        </authorList>
    </citation>
    <scope>NUCLEOTIDE SEQUENCE [GENOMIC DNA]</scope>
    <scope>FUNCTION</scope>
    <scope>INTERACTION WITH RSP5</scope>
</reference>
<reference key="2">
    <citation type="submission" date="1995-06" db="EMBL/GenBank/DDBJ databases">
        <authorList>
            <person name="Stein T."/>
        </authorList>
    </citation>
    <scope>NUCLEOTIDE SEQUENCE [GENOMIC DNA]</scope>
    <source>
        <strain>S288c / GRF88</strain>
    </source>
</reference>
<reference key="3">
    <citation type="journal article" date="1997" name="Nature">
        <title>The nucleotide sequence of Saccharomyces cerevisiae chromosome XIII.</title>
        <authorList>
            <person name="Bowman S."/>
            <person name="Churcher C.M."/>
            <person name="Badcock K."/>
            <person name="Brown D."/>
            <person name="Chillingworth T."/>
            <person name="Connor R."/>
            <person name="Dedman K."/>
            <person name="Devlin K."/>
            <person name="Gentles S."/>
            <person name="Hamlin N."/>
            <person name="Hunt S."/>
            <person name="Jagels K."/>
            <person name="Lye G."/>
            <person name="Moule S."/>
            <person name="Odell C."/>
            <person name="Pearson D."/>
            <person name="Rajandream M.A."/>
            <person name="Rice P."/>
            <person name="Skelton J."/>
            <person name="Walsh S.V."/>
            <person name="Whitehead S."/>
            <person name="Barrell B.G."/>
        </authorList>
    </citation>
    <scope>NUCLEOTIDE SEQUENCE [LARGE SCALE GENOMIC DNA]</scope>
    <source>
        <strain>ATCC 204508 / S288c</strain>
    </source>
</reference>
<reference key="4">
    <citation type="journal article" date="2014" name="G3 (Bethesda)">
        <title>The reference genome sequence of Saccharomyces cerevisiae: Then and now.</title>
        <authorList>
            <person name="Engel S.R."/>
            <person name="Dietrich F.S."/>
            <person name="Fisk D.G."/>
            <person name="Binkley G."/>
            <person name="Balakrishnan R."/>
            <person name="Costanzo M.C."/>
            <person name="Dwight S.S."/>
            <person name="Hitz B.C."/>
            <person name="Karra K."/>
            <person name="Nash R.S."/>
            <person name="Weng S."/>
            <person name="Wong E.D."/>
            <person name="Lloyd P."/>
            <person name="Skrzypek M.S."/>
            <person name="Miyasato S.R."/>
            <person name="Simison M."/>
            <person name="Cherry J.M."/>
        </authorList>
    </citation>
    <scope>GENOME REANNOTATION</scope>
    <source>
        <strain>ATCC 204508 / S288c</strain>
    </source>
</reference>
<reference key="5">
    <citation type="submission" date="1995-04" db="EMBL/GenBank/DDBJ databases">
        <authorList>
            <person name="Biggins S."/>
            <person name="Rose M.D."/>
        </authorList>
    </citation>
    <scope>NUCLEOTIDE SEQUENCE [GENOMIC DNA] OF 1-776</scope>
    <source>
        <strain>ATCC 204508 / S288c</strain>
    </source>
</reference>
<reference key="6">
    <citation type="journal article" date="1998" name="Gene">
        <title>The PY-motif of Bul1 protein is essential for growth of Saccharomyces cerevisiae under various stress conditions.</title>
        <authorList>
            <person name="Yashiroda H."/>
            <person name="Kaida D."/>
            <person name="Toh-e A."/>
            <person name="Kikuchi Y."/>
        </authorList>
    </citation>
    <scope>FUNCTION</scope>
    <scope>DOMAIN</scope>
    <scope>INTERACTION WITH RSP5</scope>
    <scope>MUTAGENESIS OF PRO-157 AND PRO-158</scope>
</reference>
<reference key="7">
    <citation type="journal article" date="2000" name="Mol. Cell. Biol.">
        <title>Yeast glycogen synthase kinase 3 is involved in protein degradation in cooperation with Bul1, Bul2, and Rsp5.</title>
        <authorList>
            <person name="Andoh T."/>
            <person name="Hirata Y."/>
            <person name="Kikuchi A."/>
        </authorList>
    </citation>
    <scope>FUNCTION</scope>
</reference>
<reference key="8">
    <citation type="journal article" date="2001" name="J. Biol. Chem.">
        <title>Ubiquitin is required for sorting to the vacuole of the yeast general amino acid permease, Gap1.</title>
        <authorList>
            <person name="Soetens O."/>
            <person name="De Craene J.-O."/>
            <person name="Andre B."/>
        </authorList>
    </citation>
    <scope>FUNCTION</scope>
</reference>
<reference key="9">
    <citation type="journal article" date="2001" name="J. Cell Biol.">
        <title>Components of a ubiquitin ligase complex specify polyubiquitination and intracellular trafficking of the general amino acid permease.</title>
        <authorList>
            <person name="Helliwell S.B."/>
            <person name="Losko S."/>
            <person name="Kaiser C.A."/>
        </authorList>
    </citation>
    <scope>FUNCTION</scope>
</reference>
<reference key="10">
    <citation type="journal article" date="2003" name="Biochem. Biophys. Res. Commun.">
        <title>Rsp5-Bul1/2 complex is necessary for the HSE-mediated gene expression in budding yeast.</title>
        <authorList>
            <person name="Kaida D."/>
            <person name="Toh-e A."/>
            <person name="Kikuchi Y."/>
        </authorList>
    </citation>
    <scope>FUNCTION OF THE RSP5-BUL1/2 COMPLEX</scope>
    <scope>MUTAGENESIS OF PRO-157 AND PRO-158</scope>
</reference>
<reference key="11">
    <citation type="journal article" date="2003" name="Mol. Cell. Biol.">
        <title>Pressure-induced differential regulation of the two tryptophan permeases Tat1 and Tat2 by ubiquitin ligase Rsp5 and its binding proteins, Bul1 and Bul2.</title>
        <authorList>
            <person name="Abe F."/>
            <person name="Iida H."/>
        </authorList>
    </citation>
    <scope>FUNCTION OF THE RSP5-BUL1/2 COMPLEX</scope>
</reference>
<reference key="12">
    <citation type="journal article" date="2003" name="Nature">
        <title>Global analysis of protein localization in budding yeast.</title>
        <authorList>
            <person name="Huh W.-K."/>
            <person name="Falvo J.V."/>
            <person name="Gerke L.C."/>
            <person name="Carroll A.S."/>
            <person name="Howson R.W."/>
            <person name="Weissman J.S."/>
            <person name="O'Shea E.K."/>
        </authorList>
    </citation>
    <scope>SUBCELLULAR LOCATION [LARGE SCALE ANALYSIS]</scope>
</reference>
<reference key="13">
    <citation type="journal article" date="2003" name="Nature">
        <title>Global analysis of protein expression in yeast.</title>
        <authorList>
            <person name="Ghaemmaghami S."/>
            <person name="Huh W.-K."/>
            <person name="Bower K."/>
            <person name="Howson R.W."/>
            <person name="Belle A."/>
            <person name="Dephoure N."/>
            <person name="O'Shea E.K."/>
            <person name="Weissman J.S."/>
        </authorList>
    </citation>
    <scope>LEVEL OF PROTEIN EXPRESSION [LARGE SCALE ANALYSIS]</scope>
</reference>
<reference key="14">
    <citation type="journal article" date="2004" name="J. Biol. Chem.">
        <title>Genetic, biochemical, and transcriptional responses of Saccharomyces cerevisiae to the novel immunomodulator FTY720 largely mimic those of the natural sphingolipid phytosphingosine.</title>
        <authorList>
            <person name="Welsch C.A."/>
            <person name="Roth L.W.A."/>
            <person name="Goetschy J.F."/>
            <person name="Movva N.R."/>
        </authorList>
    </citation>
    <scope>FUNCTION</scope>
</reference>
<reference key="15">
    <citation type="journal article" date="2004" name="J. Biol. Chem.">
        <title>NPR1 kinase and RSP5-BUL1/2 ubiquitin ligase control GLN3-dependent transcription in Saccharomyces cerevisiae.</title>
        <authorList>
            <person name="Crespo J.L."/>
            <person name="Helliwell S.B."/>
            <person name="Wiederkehr C."/>
            <person name="Demougin P."/>
            <person name="Fowler B."/>
            <person name="Primig M."/>
            <person name="Hall M.N."/>
        </authorList>
    </citation>
    <scope>FUNCTION OF THE RSP5-BUL1/2 COMPLEX</scope>
</reference>
<reference key="16">
    <citation type="journal article" date="2004" name="Mol. Biol. Cell">
        <title>Ubiquitin-mediated targeting of a mutant plasma membrane ATPase, Pma1-7, to the endosomal/vacuolar system in yeast.</title>
        <authorList>
            <person name="Pizzirusso M."/>
            <person name="Chang A."/>
        </authorList>
    </citation>
    <scope>FUNCTION OF THE RSP5-BUL1/2 COMPLEX</scope>
</reference>
<reference key="17">
    <citation type="journal article" date="2005" name="Mol. Cell. Proteomics">
        <title>Quantitative phosphoproteomics applied to the yeast pheromone signaling pathway.</title>
        <authorList>
            <person name="Gruhler A."/>
            <person name="Olsen J.V."/>
            <person name="Mohammed S."/>
            <person name="Mortensen P."/>
            <person name="Faergeman N.J."/>
            <person name="Mann M."/>
            <person name="Jensen O.N."/>
        </authorList>
    </citation>
    <scope>PHOSPHORYLATION [LARGE SCALE ANALYSIS] AT SER-70</scope>
    <scope>IDENTIFICATION BY MASS SPECTROMETRY [LARGE SCALE ANALYSIS]</scope>
    <source>
        <strain>YAL6B</strain>
    </source>
</reference>
<reference key="18">
    <citation type="journal article" date="2006" name="J. Biol. Chem.">
        <title>Transduction of the nitrogen signal activating Gln3-mediated transcription is independent of Npr1 kinase and Rsp5-Bul1/2 ubiquitin ligase in Saccharomyces cerevisiae.</title>
        <authorList>
            <person name="Feller A."/>
            <person name="Boeckstaens M."/>
            <person name="Marini A.-M."/>
            <person name="Dubois E."/>
        </authorList>
    </citation>
    <scope>FUNCTION OF THE RSP5-BUL1/2 COMPLEX</scope>
</reference>
<reference key="19">
    <citation type="journal article" date="2007" name="Proc. Natl. Acad. Sci. U.S.A.">
        <title>Analysis of phosphorylation sites on proteins from Saccharomyces cerevisiae by electron transfer dissociation (ETD) mass spectrometry.</title>
        <authorList>
            <person name="Chi A."/>
            <person name="Huttenhower C."/>
            <person name="Geer L.Y."/>
            <person name="Coon J.J."/>
            <person name="Syka J.E.P."/>
            <person name="Bai D.L."/>
            <person name="Shabanowitz J."/>
            <person name="Burke D.J."/>
            <person name="Troyanskaya O.G."/>
            <person name="Hunt D.F."/>
        </authorList>
    </citation>
    <scope>PHOSPHORYLATION [LARGE SCALE ANALYSIS] AT SER-58</scope>
    <scope>IDENTIFICATION BY MASS SPECTROMETRY [LARGE SCALE ANALYSIS]</scope>
</reference>
<reference key="20">
    <citation type="journal article" date="2008" name="Mol. Cell. Proteomics">
        <title>A multidimensional chromatography technology for in-depth phosphoproteome analysis.</title>
        <authorList>
            <person name="Albuquerque C.P."/>
            <person name="Smolka M.B."/>
            <person name="Payne S.H."/>
            <person name="Bafna V."/>
            <person name="Eng J."/>
            <person name="Zhou H."/>
        </authorList>
    </citation>
    <scope>IDENTIFICATION BY MASS SPECTROMETRY [LARGE SCALE ANALYSIS]</scope>
</reference>
<reference key="21">
    <citation type="journal article" date="2009" name="Science">
        <title>Global analysis of Cdk1 substrate phosphorylation sites provides insights into evolution.</title>
        <authorList>
            <person name="Holt L.J."/>
            <person name="Tuch B.B."/>
            <person name="Villen J."/>
            <person name="Johnson A.D."/>
            <person name="Gygi S.P."/>
            <person name="Morgan D.O."/>
        </authorList>
    </citation>
    <scope>IDENTIFICATION BY MASS SPECTROMETRY [LARGE SCALE ANALYSIS]</scope>
</reference>
<keyword id="KW-0963">Cytoplasm</keyword>
<keyword id="KW-0597">Phosphoprotein</keyword>
<keyword id="KW-1185">Reference proteome</keyword>
<keyword id="KW-0677">Repeat</keyword>
<keyword id="KW-0833">Ubl conjugation pathway</keyword>
<gene>
    <name type="primary">BUL1</name>
    <name type="synonym">DAG1</name>
    <name type="synonym">RDS1</name>
    <name type="synonym">SMM2</name>
    <name type="ordered locus">YMR275C</name>
    <name type="ORF">YM8021.01C</name>
    <name type="ORF">YM8156.17C</name>
</gene>
<evidence type="ECO:0000256" key="1">
    <source>
        <dbReference type="SAM" id="MobiDB-lite"/>
    </source>
</evidence>
<evidence type="ECO:0000269" key="2">
    <source>
    </source>
</evidence>
<evidence type="ECO:0000269" key="3">
    <source>
    </source>
</evidence>
<evidence type="ECO:0000269" key="4">
    <source>
    </source>
</evidence>
<evidence type="ECO:0000269" key="5">
    <source>
    </source>
</evidence>
<evidence type="ECO:0000269" key="6">
    <source>
    </source>
</evidence>
<evidence type="ECO:0000269" key="7">
    <source>
    </source>
</evidence>
<evidence type="ECO:0000269" key="8">
    <source>
    </source>
</evidence>
<evidence type="ECO:0000269" key="9">
    <source>
    </source>
</evidence>
<evidence type="ECO:0000269" key="10">
    <source>
    </source>
</evidence>
<evidence type="ECO:0000269" key="11">
    <source>
    </source>
</evidence>
<evidence type="ECO:0000269" key="12">
    <source>
    </source>
</evidence>
<evidence type="ECO:0000269" key="13">
    <source>
    </source>
</evidence>
<evidence type="ECO:0000269" key="14">
    <source>
    </source>
</evidence>
<evidence type="ECO:0000305" key="15"/>
<evidence type="ECO:0007744" key="16">
    <source>
    </source>
</evidence>
<evidence type="ECO:0007744" key="17">
    <source>
    </source>
</evidence>
<organism>
    <name type="scientific">Saccharomyces cerevisiae (strain ATCC 204508 / S288c)</name>
    <name type="common">Baker's yeast</name>
    <dbReference type="NCBI Taxonomy" id="559292"/>
    <lineage>
        <taxon>Eukaryota</taxon>
        <taxon>Fungi</taxon>
        <taxon>Dikarya</taxon>
        <taxon>Ascomycota</taxon>
        <taxon>Saccharomycotina</taxon>
        <taxon>Saccharomycetes</taxon>
        <taxon>Saccharomycetales</taxon>
        <taxon>Saccharomycetaceae</taxon>
        <taxon>Saccharomyces</taxon>
    </lineage>
</organism>